<evidence type="ECO:0000250" key="1"/>
<evidence type="ECO:0000255" key="2"/>
<evidence type="ECO:0000256" key="3">
    <source>
        <dbReference type="SAM" id="MobiDB-lite"/>
    </source>
</evidence>
<evidence type="ECO:0000305" key="4"/>
<keyword id="KW-0067">ATP-binding</keyword>
<keyword id="KW-0418">Kinase</keyword>
<keyword id="KW-0547">Nucleotide-binding</keyword>
<keyword id="KW-0539">Nucleus</keyword>
<keyword id="KW-1185">Reference proteome</keyword>
<keyword id="KW-0698">rRNA processing</keyword>
<keyword id="KW-0808">Transferase</keyword>
<dbReference type="EC" id="2.7.1.-"/>
<dbReference type="EMBL" id="CH476601">
    <property type="protein sequence ID" value="EAU33454.1"/>
    <property type="molecule type" value="Genomic_DNA"/>
</dbReference>
<dbReference type="RefSeq" id="XP_001214871.1">
    <property type="nucleotide sequence ID" value="XM_001214871.1"/>
</dbReference>
<dbReference type="SMR" id="Q0CKU1"/>
<dbReference type="STRING" id="341663.Q0CKU1"/>
<dbReference type="EnsemblFungi" id="EAU33454">
    <property type="protein sequence ID" value="EAU33454"/>
    <property type="gene ID" value="ATEG_05693"/>
</dbReference>
<dbReference type="GeneID" id="4321818"/>
<dbReference type="VEuPathDB" id="FungiDB:ATEG_05693"/>
<dbReference type="eggNOG" id="KOG2750">
    <property type="taxonomic scope" value="Eukaryota"/>
</dbReference>
<dbReference type="HOGENOM" id="CLU_010345_1_2_1"/>
<dbReference type="OMA" id="PEFAPMG"/>
<dbReference type="OrthoDB" id="4054781at2759"/>
<dbReference type="Proteomes" id="UP000007963">
    <property type="component" value="Unassembled WGS sequence"/>
</dbReference>
<dbReference type="GO" id="GO:0005730">
    <property type="term" value="C:nucleolus"/>
    <property type="evidence" value="ECO:0007669"/>
    <property type="project" value="UniProtKB-SubCell"/>
</dbReference>
<dbReference type="GO" id="GO:0005524">
    <property type="term" value="F:ATP binding"/>
    <property type="evidence" value="ECO:0007669"/>
    <property type="project" value="UniProtKB-KW"/>
</dbReference>
<dbReference type="GO" id="GO:0051731">
    <property type="term" value="F:polynucleotide 5'-hydroxyl-kinase activity"/>
    <property type="evidence" value="ECO:0000250"/>
    <property type="project" value="UniProtKB"/>
</dbReference>
<dbReference type="GO" id="GO:0000448">
    <property type="term" value="P:cleavage in ITS2 between 5.8S rRNA and LSU-rRNA of tricistronic rRNA transcript (SSU-rRNA, 5.8S rRNA, LSU-rRNA)"/>
    <property type="evidence" value="ECO:0007669"/>
    <property type="project" value="TreeGrafter"/>
</dbReference>
<dbReference type="GO" id="GO:0006364">
    <property type="term" value="P:rRNA processing"/>
    <property type="evidence" value="ECO:0000250"/>
    <property type="project" value="UniProtKB"/>
</dbReference>
<dbReference type="FunFam" id="3.40.50.300:FF:001156">
    <property type="entry name" value="Polynucleotide 5-hydroxyl-kinase grc3"/>
    <property type="match status" value="1"/>
</dbReference>
<dbReference type="Gene3D" id="3.40.50.300">
    <property type="entry name" value="P-loop containing nucleotide triphosphate hydrolases"/>
    <property type="match status" value="1"/>
</dbReference>
<dbReference type="InterPro" id="IPR045116">
    <property type="entry name" value="Clp1/Grc3"/>
</dbReference>
<dbReference type="InterPro" id="IPR032319">
    <property type="entry name" value="CLP1_P"/>
</dbReference>
<dbReference type="InterPro" id="IPR027417">
    <property type="entry name" value="P-loop_NTPase"/>
</dbReference>
<dbReference type="PANTHER" id="PTHR12755">
    <property type="entry name" value="CLEAVAGE/POLYADENYLATION FACTOR IA SUBUNIT CLP1P"/>
    <property type="match status" value="1"/>
</dbReference>
<dbReference type="PANTHER" id="PTHR12755:SF3">
    <property type="entry name" value="POLYNUCLEOTIDE 5'-HYDROXYL-KINASE NOL9"/>
    <property type="match status" value="1"/>
</dbReference>
<dbReference type="Pfam" id="PF16575">
    <property type="entry name" value="CLP1_P"/>
    <property type="match status" value="1"/>
</dbReference>
<dbReference type="SUPFAM" id="SSF52540">
    <property type="entry name" value="P-loop containing nucleoside triphosphate hydrolases"/>
    <property type="match status" value="2"/>
</dbReference>
<name>GRC3_ASPTN</name>
<accession>Q0CKU1</accession>
<comment type="function">
    <text evidence="1">Polynucleotide 5'-kinase involved in rRNA processing.</text>
</comment>
<comment type="subcellular location">
    <subcellularLocation>
        <location evidence="1">Nucleus</location>
        <location evidence="1">Nucleolus</location>
    </subcellularLocation>
</comment>
<comment type="similarity">
    <text evidence="4">Belongs to the Clp1 family. NOL9/GRC3 subfamily.</text>
</comment>
<reference key="1">
    <citation type="submission" date="2005-09" db="EMBL/GenBank/DDBJ databases">
        <title>Annotation of the Aspergillus terreus NIH2624 genome.</title>
        <authorList>
            <person name="Birren B.W."/>
            <person name="Lander E.S."/>
            <person name="Galagan J.E."/>
            <person name="Nusbaum C."/>
            <person name="Devon K."/>
            <person name="Henn M."/>
            <person name="Ma L.-J."/>
            <person name="Jaffe D.B."/>
            <person name="Butler J."/>
            <person name="Alvarez P."/>
            <person name="Gnerre S."/>
            <person name="Grabherr M."/>
            <person name="Kleber M."/>
            <person name="Mauceli E.W."/>
            <person name="Brockman W."/>
            <person name="Rounsley S."/>
            <person name="Young S.K."/>
            <person name="LaButti K."/>
            <person name="Pushparaj V."/>
            <person name="DeCaprio D."/>
            <person name="Crawford M."/>
            <person name="Koehrsen M."/>
            <person name="Engels R."/>
            <person name="Montgomery P."/>
            <person name="Pearson M."/>
            <person name="Howarth C."/>
            <person name="Larson L."/>
            <person name="Luoma S."/>
            <person name="White J."/>
            <person name="Alvarado L."/>
            <person name="Kodira C.D."/>
            <person name="Zeng Q."/>
            <person name="Oleary S."/>
            <person name="Yandava C."/>
            <person name="Denning D.W."/>
            <person name="Nierman W.C."/>
            <person name="Milne T."/>
            <person name="Madden K."/>
        </authorList>
    </citation>
    <scope>NUCLEOTIDE SEQUENCE [LARGE SCALE GENOMIC DNA]</scope>
    <source>
        <strain>NIH 2624 / FGSC A1156</strain>
    </source>
</reference>
<organism>
    <name type="scientific">Aspergillus terreus (strain NIH 2624 / FGSC A1156)</name>
    <dbReference type="NCBI Taxonomy" id="341663"/>
    <lineage>
        <taxon>Eukaryota</taxon>
        <taxon>Fungi</taxon>
        <taxon>Dikarya</taxon>
        <taxon>Ascomycota</taxon>
        <taxon>Pezizomycotina</taxon>
        <taxon>Eurotiomycetes</taxon>
        <taxon>Eurotiomycetidae</taxon>
        <taxon>Eurotiales</taxon>
        <taxon>Aspergillaceae</taxon>
        <taxon>Aspergillus</taxon>
        <taxon>Aspergillus subgen. Circumdati</taxon>
    </lineage>
</organism>
<proteinExistence type="inferred from homology"/>
<sequence length="815" mass="89374">MKRKAEKQQSAAPVSAFAARKARQQAQIAATPEPVKPPSAVETTEEPPSKKARTSPEEDTPSQSVSPADRVQTRRSSRRKAEPSEIEKTPRRKTKTTPATPPEHLTDGTVGRESGIQTPVEEVSEPEGNDVPLDDADRYESPADTPALVEAFPLSKTRLNKSNIVYSDEHTLCVRIKEKLSLVVIGHYDVWVKRGVISLMGAKLHPSPRLYRVYAPSTHSLPVIKCVSGVDGAAEVEIKSCHSGIYRLRDLSPLYQRIWNGSNTSADKLTLKNAEPHARRTFSVLYTSTDDSLKRHLRPLHLEKQWSSAIKSLSQKGGKLRALICGPKGSGKSTFSRYLLNHLLSPAPQTEPSYCNTDGVAFLDLDPGQPEFAPMGQIYLAHLRSPVFGPPFSHPSLEGSQDGTVIRAHHIGASSPKDDPDHYVLAATDLMDRYRALLASYPQCPLIINYPGWIFGLGLEVATWLVRSLGLSDVIYMSEKGPAEVVEPLGQAAAAARIPLTTLPSQPTDFVSRSSAQLRSMQMQSYFHMTRPADVSTPLWLDQPMSRTRPFKVHYAGPHQGIRGIMVMGSQIHPDLLHEALDGSLVGVVAVESPNAILGHSEVPGLANGVMGKQPSPAEEGSEDAVMDEATEMVPTAPLASIDSGITRSPHEDLPYLFVGAGSCNPLDPKASHCLGLALVRSVNVAARQLELVTPIAASRIRDALQQGYGIVLVRGQLDNPNWALSEEYYAARAAEKRHRRFVDSSRKDKVDDGTDDSAHTSAILKDRIRRASHVPWMTVIEDNSRRQREAAQREKSLWKLRKKAYPGSESEGDW</sequence>
<feature type="chain" id="PRO_0000289954" description="Polynucleotide 5'-hydroxyl-kinase grc3">
    <location>
        <begin position="1"/>
        <end position="815"/>
    </location>
</feature>
<feature type="region of interest" description="Disordered" evidence="3">
    <location>
        <begin position="1"/>
        <end position="141"/>
    </location>
</feature>
<feature type="compositionally biased region" description="Low complexity" evidence="3">
    <location>
        <begin position="16"/>
        <end position="30"/>
    </location>
</feature>
<feature type="compositionally biased region" description="Basic and acidic residues" evidence="3">
    <location>
        <begin position="79"/>
        <end position="89"/>
    </location>
</feature>
<feature type="compositionally biased region" description="Acidic residues" evidence="3">
    <location>
        <begin position="122"/>
        <end position="134"/>
    </location>
</feature>
<feature type="binding site" evidence="2">
    <location>
        <begin position="326"/>
        <end position="333"/>
    </location>
    <ligand>
        <name>ATP</name>
        <dbReference type="ChEBI" id="CHEBI:30616"/>
    </ligand>
</feature>
<protein>
    <recommendedName>
        <fullName>Polynucleotide 5'-hydroxyl-kinase grc3</fullName>
        <ecNumber>2.7.1.-</ecNumber>
    </recommendedName>
</protein>
<gene>
    <name type="primary">grc3</name>
    <name type="ORF">ATEG_05693</name>
</gene>